<keyword id="KW-0175">Coiled coil</keyword>
<keyword id="KW-1185">Reference proteome</keyword>
<comment type="sequence caution" evidence="3">
    <conflict type="erroneous gene model prediction">
        <sequence resource="EMBL-CDS" id="AEE79759"/>
    </conflict>
</comment>
<comment type="sequence caution" evidence="3">
    <conflict type="erroneous gene model prediction">
        <sequence resource="EMBL-CDS" id="CAB68163"/>
    </conflict>
</comment>
<protein>
    <recommendedName>
        <fullName>MATH domain and coiled-coil domain-containing protein At3g58250</fullName>
    </recommendedName>
    <alternativeName>
        <fullName>RTM3-like protein At3g58250</fullName>
    </alternativeName>
</protein>
<organism>
    <name type="scientific">Arabidopsis thaliana</name>
    <name type="common">Mouse-ear cress</name>
    <dbReference type="NCBI Taxonomy" id="3702"/>
    <lineage>
        <taxon>Eukaryota</taxon>
        <taxon>Viridiplantae</taxon>
        <taxon>Streptophyta</taxon>
        <taxon>Embryophyta</taxon>
        <taxon>Tracheophyta</taxon>
        <taxon>Spermatophyta</taxon>
        <taxon>Magnoliopsida</taxon>
        <taxon>eudicotyledons</taxon>
        <taxon>Gunneridae</taxon>
        <taxon>Pentapetalae</taxon>
        <taxon>rosids</taxon>
        <taxon>malvids</taxon>
        <taxon>Brassicales</taxon>
        <taxon>Brassicaceae</taxon>
        <taxon>Camelineae</taxon>
        <taxon>Arabidopsis</taxon>
    </lineage>
</organism>
<accession>Q9M2J1</accession>
<name>MCC19_ARATH</name>
<gene>
    <name type="ordered locus">At3g58250</name>
    <name type="ORF">F9D24.160</name>
</gene>
<feature type="chain" id="PRO_0000429296" description="MATH domain and coiled-coil domain-containing protein At3g58250">
    <location>
        <begin position="1"/>
        <end position="303"/>
    </location>
</feature>
<feature type="domain" description="MATH" evidence="2">
    <location>
        <begin position="8"/>
        <end position="135"/>
    </location>
</feature>
<feature type="coiled-coil region" evidence="1">
    <location>
        <begin position="231"/>
        <end position="287"/>
    </location>
</feature>
<evidence type="ECO:0000255" key="1"/>
<evidence type="ECO:0000255" key="2">
    <source>
        <dbReference type="PROSITE-ProRule" id="PRU00129"/>
    </source>
</evidence>
<evidence type="ECO:0000305" key="3"/>
<proteinExistence type="predicted"/>
<dbReference type="EMBL" id="AL137081">
    <property type="protein sequence ID" value="CAB68163.1"/>
    <property type="status" value="ALT_SEQ"/>
    <property type="molecule type" value="Genomic_DNA"/>
</dbReference>
<dbReference type="EMBL" id="CP002686">
    <property type="protein sequence ID" value="AEE79759.1"/>
    <property type="status" value="ALT_SEQ"/>
    <property type="molecule type" value="Genomic_DNA"/>
</dbReference>
<dbReference type="PIR" id="T45985">
    <property type="entry name" value="T45985"/>
</dbReference>
<dbReference type="RefSeq" id="NP_191384.1">
    <property type="nucleotide sequence ID" value="NM_115687.1"/>
</dbReference>
<dbReference type="SMR" id="Q9M2J1"/>
<dbReference type="FunCoup" id="Q9M2J1">
    <property type="interactions" value="47"/>
</dbReference>
<dbReference type="PaxDb" id="3702-AT3G58250.1"/>
<dbReference type="DNASU" id="824994"/>
<dbReference type="GeneID" id="824994"/>
<dbReference type="KEGG" id="ath:AT3G58250"/>
<dbReference type="Araport" id="AT3G58250"/>
<dbReference type="TAIR" id="AT3G58250"/>
<dbReference type="eggNOG" id="KOG1987">
    <property type="taxonomic scope" value="Eukaryota"/>
</dbReference>
<dbReference type="HOGENOM" id="CLU_026537_0_0_1"/>
<dbReference type="InParanoid" id="Q9M2J1"/>
<dbReference type="PRO" id="PR:Q9M2J1"/>
<dbReference type="Proteomes" id="UP000006548">
    <property type="component" value="Chromosome 3"/>
</dbReference>
<dbReference type="ExpressionAtlas" id="Q9M2J1">
    <property type="expression patterns" value="baseline and differential"/>
</dbReference>
<dbReference type="CDD" id="cd00121">
    <property type="entry name" value="MATH"/>
    <property type="match status" value="1"/>
</dbReference>
<dbReference type="Gene3D" id="2.60.210.10">
    <property type="entry name" value="Apoptosis, Tumor Necrosis Factor Receptor Associated Protein 2, Chain A"/>
    <property type="match status" value="1"/>
</dbReference>
<dbReference type="InterPro" id="IPR050804">
    <property type="entry name" value="MATH-CC_domain_protein"/>
</dbReference>
<dbReference type="InterPro" id="IPR002083">
    <property type="entry name" value="MATH/TRAF_dom"/>
</dbReference>
<dbReference type="InterPro" id="IPR008974">
    <property type="entry name" value="TRAF-like"/>
</dbReference>
<dbReference type="PANTHER" id="PTHR46236:SF35">
    <property type="entry name" value="MATH DOMAIN-CONTAINING PROTEIN"/>
    <property type="match status" value="1"/>
</dbReference>
<dbReference type="PANTHER" id="PTHR46236">
    <property type="entry name" value="TRAF-LIKE SUPERFAMILY PROTEIN"/>
    <property type="match status" value="1"/>
</dbReference>
<dbReference type="Pfam" id="PF22486">
    <property type="entry name" value="MATH_2"/>
    <property type="match status" value="1"/>
</dbReference>
<dbReference type="SMART" id="SM00061">
    <property type="entry name" value="MATH"/>
    <property type="match status" value="1"/>
</dbReference>
<dbReference type="SUPFAM" id="SSF49599">
    <property type="entry name" value="TRAF domain-like"/>
    <property type="match status" value="1"/>
</dbReference>
<dbReference type="PROSITE" id="PS50144">
    <property type="entry name" value="MATH"/>
    <property type="match status" value="1"/>
</dbReference>
<sequence>MGNDQADKKKFSWVIKNFSSLQSEKIYSDQFVIDGCRWRLLAFPKGNDTKSDHLSLYLDVAESESLPCGWRRHAQFSFTIVNHIPEKCSQRKETIHWFCEKVSDWGFTNLVPLIELKAEDSGFLVKGELKIVVEIEVLEVIGLLNVSESESMDVNGFHVLPSQAKYVKSLFEIHPDIATKFRIKNQYLKTGYMNVLLCLIETVRRSPKEISKNDLADAYVALESLTDHGFKLDWLKKKLDQVTQKKEKEAAGETRMHEIGEELKDLKLKCSDLEAQLDKEKADVLAAIAPLGSSDDGVFDDFF</sequence>
<reference key="1">
    <citation type="journal article" date="2000" name="Nature">
        <title>Sequence and analysis of chromosome 3 of the plant Arabidopsis thaliana.</title>
        <authorList>
            <person name="Salanoubat M."/>
            <person name="Lemcke K."/>
            <person name="Rieger M."/>
            <person name="Ansorge W."/>
            <person name="Unseld M."/>
            <person name="Fartmann B."/>
            <person name="Valle G."/>
            <person name="Bloecker H."/>
            <person name="Perez-Alonso M."/>
            <person name="Obermaier B."/>
            <person name="Delseny M."/>
            <person name="Boutry M."/>
            <person name="Grivell L.A."/>
            <person name="Mache R."/>
            <person name="Puigdomenech P."/>
            <person name="De Simone V."/>
            <person name="Choisne N."/>
            <person name="Artiguenave F."/>
            <person name="Robert C."/>
            <person name="Brottier P."/>
            <person name="Wincker P."/>
            <person name="Cattolico L."/>
            <person name="Weissenbach J."/>
            <person name="Saurin W."/>
            <person name="Quetier F."/>
            <person name="Schaefer M."/>
            <person name="Mueller-Auer S."/>
            <person name="Gabel C."/>
            <person name="Fuchs M."/>
            <person name="Benes V."/>
            <person name="Wurmbach E."/>
            <person name="Drzonek H."/>
            <person name="Erfle H."/>
            <person name="Jordan N."/>
            <person name="Bangert S."/>
            <person name="Wiedelmann R."/>
            <person name="Kranz H."/>
            <person name="Voss H."/>
            <person name="Holland R."/>
            <person name="Brandt P."/>
            <person name="Nyakatura G."/>
            <person name="Vezzi A."/>
            <person name="D'Angelo M."/>
            <person name="Pallavicini A."/>
            <person name="Toppo S."/>
            <person name="Simionati B."/>
            <person name="Conrad A."/>
            <person name="Hornischer K."/>
            <person name="Kauer G."/>
            <person name="Loehnert T.-H."/>
            <person name="Nordsiek G."/>
            <person name="Reichelt J."/>
            <person name="Scharfe M."/>
            <person name="Schoen O."/>
            <person name="Bargues M."/>
            <person name="Terol J."/>
            <person name="Climent J."/>
            <person name="Navarro P."/>
            <person name="Collado C."/>
            <person name="Perez-Perez A."/>
            <person name="Ottenwaelder B."/>
            <person name="Duchemin D."/>
            <person name="Cooke R."/>
            <person name="Laudie M."/>
            <person name="Berger-Llauro C."/>
            <person name="Purnelle B."/>
            <person name="Masuy D."/>
            <person name="de Haan M."/>
            <person name="Maarse A.C."/>
            <person name="Alcaraz J.-P."/>
            <person name="Cottet A."/>
            <person name="Casacuberta E."/>
            <person name="Monfort A."/>
            <person name="Argiriou A."/>
            <person name="Flores M."/>
            <person name="Liguori R."/>
            <person name="Vitale D."/>
            <person name="Mannhaupt G."/>
            <person name="Haase D."/>
            <person name="Schoof H."/>
            <person name="Rudd S."/>
            <person name="Zaccaria P."/>
            <person name="Mewes H.-W."/>
            <person name="Mayer K.F.X."/>
            <person name="Kaul S."/>
            <person name="Town C.D."/>
            <person name="Koo H.L."/>
            <person name="Tallon L.J."/>
            <person name="Jenkins J."/>
            <person name="Rooney T."/>
            <person name="Rizzo M."/>
            <person name="Walts A."/>
            <person name="Utterback T."/>
            <person name="Fujii C.Y."/>
            <person name="Shea T.P."/>
            <person name="Creasy T.H."/>
            <person name="Haas B."/>
            <person name="Maiti R."/>
            <person name="Wu D."/>
            <person name="Peterson J."/>
            <person name="Van Aken S."/>
            <person name="Pai G."/>
            <person name="Militscher J."/>
            <person name="Sellers P."/>
            <person name="Gill J.E."/>
            <person name="Feldblyum T.V."/>
            <person name="Preuss D."/>
            <person name="Lin X."/>
            <person name="Nierman W.C."/>
            <person name="Salzberg S.L."/>
            <person name="White O."/>
            <person name="Venter J.C."/>
            <person name="Fraser C.M."/>
            <person name="Kaneko T."/>
            <person name="Nakamura Y."/>
            <person name="Sato S."/>
            <person name="Kato T."/>
            <person name="Asamizu E."/>
            <person name="Sasamoto S."/>
            <person name="Kimura T."/>
            <person name="Idesawa K."/>
            <person name="Kawashima K."/>
            <person name="Kishida Y."/>
            <person name="Kiyokawa C."/>
            <person name="Kohara M."/>
            <person name="Matsumoto M."/>
            <person name="Matsuno A."/>
            <person name="Muraki A."/>
            <person name="Nakayama S."/>
            <person name="Nakazaki N."/>
            <person name="Shinpo S."/>
            <person name="Takeuchi C."/>
            <person name="Wada T."/>
            <person name="Watanabe A."/>
            <person name="Yamada M."/>
            <person name="Yasuda M."/>
            <person name="Tabata S."/>
        </authorList>
    </citation>
    <scope>NUCLEOTIDE SEQUENCE [LARGE SCALE GENOMIC DNA]</scope>
    <source>
        <strain>cv. Columbia</strain>
    </source>
</reference>
<reference key="2">
    <citation type="journal article" date="2017" name="Plant J.">
        <title>Araport11: a complete reannotation of the Arabidopsis thaliana reference genome.</title>
        <authorList>
            <person name="Cheng C.Y."/>
            <person name="Krishnakumar V."/>
            <person name="Chan A.P."/>
            <person name="Thibaud-Nissen F."/>
            <person name="Schobel S."/>
            <person name="Town C.D."/>
        </authorList>
    </citation>
    <scope>GENOME REANNOTATION</scope>
    <source>
        <strain>cv. Columbia</strain>
    </source>
</reference>
<reference key="3">
    <citation type="journal article" date="2010" name="Plant Physiol.">
        <title>RTM3, which controls long-distance movement of potyviruses, is a member of a new plant gene family encoding a meprin and TRAF homology domain-containing protein.</title>
        <authorList>
            <person name="Cosson P."/>
            <person name="Sofer L."/>
            <person name="Le Q.H."/>
            <person name="Leger V."/>
            <person name="Schurdi-Levraud V."/>
            <person name="Whitham S.A."/>
            <person name="Yamamoto M.L."/>
            <person name="Gopalan S."/>
            <person name="Le Gall O."/>
            <person name="Candresse T."/>
            <person name="Carrington J.C."/>
            <person name="Revers F."/>
        </authorList>
    </citation>
    <scope>GENE FAMILY</scope>
</reference>